<name>RIMO_DESPS</name>
<organism>
    <name type="scientific">Desulfotalea psychrophila (strain LSv54 / DSM 12343)</name>
    <dbReference type="NCBI Taxonomy" id="177439"/>
    <lineage>
        <taxon>Bacteria</taxon>
        <taxon>Pseudomonadati</taxon>
        <taxon>Thermodesulfobacteriota</taxon>
        <taxon>Desulfobulbia</taxon>
        <taxon>Desulfobulbales</taxon>
        <taxon>Desulfocapsaceae</taxon>
        <taxon>Desulfotalea</taxon>
    </lineage>
</organism>
<comment type="function">
    <text evidence="1">Catalyzes the methylthiolation of an aspartic acid residue of ribosomal protein uS12.</text>
</comment>
<comment type="catalytic activity">
    <reaction evidence="1">
        <text>L-aspartate(89)-[ribosomal protein uS12]-hydrogen + (sulfur carrier)-SH + AH2 + 2 S-adenosyl-L-methionine = 3-methylsulfanyl-L-aspartate(89)-[ribosomal protein uS12]-hydrogen + (sulfur carrier)-H + 5'-deoxyadenosine + L-methionine + A + S-adenosyl-L-homocysteine + 2 H(+)</text>
        <dbReference type="Rhea" id="RHEA:37087"/>
        <dbReference type="Rhea" id="RHEA-COMP:10460"/>
        <dbReference type="Rhea" id="RHEA-COMP:10461"/>
        <dbReference type="Rhea" id="RHEA-COMP:14737"/>
        <dbReference type="Rhea" id="RHEA-COMP:14739"/>
        <dbReference type="ChEBI" id="CHEBI:13193"/>
        <dbReference type="ChEBI" id="CHEBI:15378"/>
        <dbReference type="ChEBI" id="CHEBI:17319"/>
        <dbReference type="ChEBI" id="CHEBI:17499"/>
        <dbReference type="ChEBI" id="CHEBI:29917"/>
        <dbReference type="ChEBI" id="CHEBI:29961"/>
        <dbReference type="ChEBI" id="CHEBI:57844"/>
        <dbReference type="ChEBI" id="CHEBI:57856"/>
        <dbReference type="ChEBI" id="CHEBI:59789"/>
        <dbReference type="ChEBI" id="CHEBI:64428"/>
        <dbReference type="ChEBI" id="CHEBI:73599"/>
        <dbReference type="EC" id="2.8.4.4"/>
    </reaction>
</comment>
<comment type="cofactor">
    <cofactor evidence="1">
        <name>[4Fe-4S] cluster</name>
        <dbReference type="ChEBI" id="CHEBI:49883"/>
    </cofactor>
    <text evidence="1">Binds 2 [4Fe-4S] clusters. One cluster is coordinated with 3 cysteines and an exchangeable S-adenosyl-L-methionine.</text>
</comment>
<comment type="subcellular location">
    <subcellularLocation>
        <location evidence="1">Cytoplasm</location>
    </subcellularLocation>
</comment>
<comment type="similarity">
    <text evidence="1">Belongs to the methylthiotransferase family. RimO subfamily.</text>
</comment>
<dbReference type="EC" id="2.8.4.4" evidence="1"/>
<dbReference type="EMBL" id="CR522870">
    <property type="protein sequence ID" value="CAG35546.1"/>
    <property type="molecule type" value="Genomic_DNA"/>
</dbReference>
<dbReference type="RefSeq" id="WP_011188062.1">
    <property type="nucleotide sequence ID" value="NC_006138.1"/>
</dbReference>
<dbReference type="SMR" id="Q6AQ27"/>
<dbReference type="STRING" id="177439.DP0817"/>
<dbReference type="KEGG" id="dps:DP0817"/>
<dbReference type="eggNOG" id="COG0621">
    <property type="taxonomic scope" value="Bacteria"/>
</dbReference>
<dbReference type="HOGENOM" id="CLU_018697_0_1_7"/>
<dbReference type="OrthoDB" id="9805215at2"/>
<dbReference type="Proteomes" id="UP000000602">
    <property type="component" value="Chromosome"/>
</dbReference>
<dbReference type="GO" id="GO:0005829">
    <property type="term" value="C:cytosol"/>
    <property type="evidence" value="ECO:0007669"/>
    <property type="project" value="TreeGrafter"/>
</dbReference>
<dbReference type="GO" id="GO:0051539">
    <property type="term" value="F:4 iron, 4 sulfur cluster binding"/>
    <property type="evidence" value="ECO:0007669"/>
    <property type="project" value="UniProtKB-UniRule"/>
</dbReference>
<dbReference type="GO" id="GO:0035599">
    <property type="term" value="F:aspartic acid methylthiotransferase activity"/>
    <property type="evidence" value="ECO:0007669"/>
    <property type="project" value="TreeGrafter"/>
</dbReference>
<dbReference type="GO" id="GO:0046872">
    <property type="term" value="F:metal ion binding"/>
    <property type="evidence" value="ECO:0007669"/>
    <property type="project" value="UniProtKB-KW"/>
</dbReference>
<dbReference type="GO" id="GO:0103039">
    <property type="term" value="F:protein methylthiotransferase activity"/>
    <property type="evidence" value="ECO:0007669"/>
    <property type="project" value="UniProtKB-EC"/>
</dbReference>
<dbReference type="GO" id="GO:0006400">
    <property type="term" value="P:tRNA modification"/>
    <property type="evidence" value="ECO:0007669"/>
    <property type="project" value="InterPro"/>
</dbReference>
<dbReference type="CDD" id="cd01335">
    <property type="entry name" value="Radical_SAM"/>
    <property type="match status" value="1"/>
</dbReference>
<dbReference type="FunFam" id="3.80.30.20:FF:000001">
    <property type="entry name" value="tRNA-2-methylthio-N(6)-dimethylallyladenosine synthase 2"/>
    <property type="match status" value="1"/>
</dbReference>
<dbReference type="Gene3D" id="3.40.50.12160">
    <property type="entry name" value="Methylthiotransferase, N-terminal domain"/>
    <property type="match status" value="1"/>
</dbReference>
<dbReference type="Gene3D" id="2.40.50.140">
    <property type="entry name" value="Nucleic acid-binding proteins"/>
    <property type="match status" value="1"/>
</dbReference>
<dbReference type="Gene3D" id="3.80.30.20">
    <property type="entry name" value="tm_1862 like domain"/>
    <property type="match status" value="1"/>
</dbReference>
<dbReference type="HAMAP" id="MF_01865">
    <property type="entry name" value="MTTase_RimO"/>
    <property type="match status" value="1"/>
</dbReference>
<dbReference type="InterPro" id="IPR006638">
    <property type="entry name" value="Elp3/MiaA/NifB-like_rSAM"/>
</dbReference>
<dbReference type="InterPro" id="IPR005839">
    <property type="entry name" value="Methylthiotransferase"/>
</dbReference>
<dbReference type="InterPro" id="IPR020612">
    <property type="entry name" value="Methylthiotransferase_CS"/>
</dbReference>
<dbReference type="InterPro" id="IPR013848">
    <property type="entry name" value="Methylthiotransferase_N"/>
</dbReference>
<dbReference type="InterPro" id="IPR038135">
    <property type="entry name" value="Methylthiotransferase_N_sf"/>
</dbReference>
<dbReference type="InterPro" id="IPR012340">
    <property type="entry name" value="NA-bd_OB-fold"/>
</dbReference>
<dbReference type="InterPro" id="IPR005840">
    <property type="entry name" value="Ribosomal_uS12_MeSTrfase_RimO"/>
</dbReference>
<dbReference type="InterPro" id="IPR007197">
    <property type="entry name" value="rSAM"/>
</dbReference>
<dbReference type="InterPro" id="IPR023404">
    <property type="entry name" value="rSAM_horseshoe"/>
</dbReference>
<dbReference type="InterPro" id="IPR002792">
    <property type="entry name" value="TRAM_dom"/>
</dbReference>
<dbReference type="NCBIfam" id="TIGR01125">
    <property type="entry name" value="30S ribosomal protein S12 methylthiotransferase RimO"/>
    <property type="match status" value="1"/>
</dbReference>
<dbReference type="NCBIfam" id="TIGR00089">
    <property type="entry name" value="MiaB/RimO family radical SAM methylthiotransferase"/>
    <property type="match status" value="1"/>
</dbReference>
<dbReference type="PANTHER" id="PTHR43837">
    <property type="entry name" value="RIBOSOMAL PROTEIN S12 METHYLTHIOTRANSFERASE RIMO"/>
    <property type="match status" value="1"/>
</dbReference>
<dbReference type="PANTHER" id="PTHR43837:SF1">
    <property type="entry name" value="RIBOSOMAL PROTEIN US12 METHYLTHIOTRANSFERASE RIMO"/>
    <property type="match status" value="1"/>
</dbReference>
<dbReference type="Pfam" id="PF04055">
    <property type="entry name" value="Radical_SAM"/>
    <property type="match status" value="1"/>
</dbReference>
<dbReference type="Pfam" id="PF18693">
    <property type="entry name" value="TRAM_2"/>
    <property type="match status" value="1"/>
</dbReference>
<dbReference type="Pfam" id="PF00919">
    <property type="entry name" value="UPF0004"/>
    <property type="match status" value="1"/>
</dbReference>
<dbReference type="SFLD" id="SFLDG01082">
    <property type="entry name" value="B12-binding_domain_containing"/>
    <property type="match status" value="1"/>
</dbReference>
<dbReference type="SFLD" id="SFLDG01061">
    <property type="entry name" value="methylthiotransferase"/>
    <property type="match status" value="1"/>
</dbReference>
<dbReference type="SFLD" id="SFLDF00274">
    <property type="entry name" value="ribosomal_protein_S12_methylth"/>
    <property type="match status" value="1"/>
</dbReference>
<dbReference type="SMART" id="SM00729">
    <property type="entry name" value="Elp3"/>
    <property type="match status" value="1"/>
</dbReference>
<dbReference type="SUPFAM" id="SSF102114">
    <property type="entry name" value="Radical SAM enzymes"/>
    <property type="match status" value="1"/>
</dbReference>
<dbReference type="PROSITE" id="PS51449">
    <property type="entry name" value="MTTASE_N"/>
    <property type="match status" value="1"/>
</dbReference>
<dbReference type="PROSITE" id="PS01278">
    <property type="entry name" value="MTTASE_RADICAL"/>
    <property type="match status" value="1"/>
</dbReference>
<dbReference type="PROSITE" id="PS51918">
    <property type="entry name" value="RADICAL_SAM"/>
    <property type="match status" value="1"/>
</dbReference>
<dbReference type="PROSITE" id="PS50926">
    <property type="entry name" value="TRAM"/>
    <property type="match status" value="1"/>
</dbReference>
<protein>
    <recommendedName>
        <fullName evidence="1">Ribosomal protein uS12 methylthiotransferase RimO</fullName>
        <shortName evidence="1">uS12 MTTase</shortName>
        <shortName evidence="1">uS12 methylthiotransferase</shortName>
        <ecNumber evidence="1">2.8.4.4</ecNumber>
    </recommendedName>
    <alternativeName>
        <fullName evidence="1">Ribosomal protein uS12 (aspartate-C(3))-methylthiotransferase</fullName>
    </alternativeName>
    <alternativeName>
        <fullName evidence="1">Ribosome maturation factor RimO</fullName>
    </alternativeName>
</protein>
<keyword id="KW-0004">4Fe-4S</keyword>
<keyword id="KW-0963">Cytoplasm</keyword>
<keyword id="KW-0408">Iron</keyword>
<keyword id="KW-0411">Iron-sulfur</keyword>
<keyword id="KW-0479">Metal-binding</keyword>
<keyword id="KW-1185">Reference proteome</keyword>
<keyword id="KW-0949">S-adenosyl-L-methionine</keyword>
<keyword id="KW-0808">Transferase</keyword>
<proteinExistence type="inferred from homology"/>
<accession>Q6AQ27</accession>
<feature type="chain" id="PRO_0000374805" description="Ribosomal protein uS12 methylthiotransferase RimO">
    <location>
        <begin position="1"/>
        <end position="443"/>
    </location>
</feature>
<feature type="domain" description="MTTase N-terminal" evidence="1">
    <location>
        <begin position="1"/>
        <end position="116"/>
    </location>
</feature>
<feature type="domain" description="Radical SAM core" evidence="2">
    <location>
        <begin position="140"/>
        <end position="370"/>
    </location>
</feature>
<feature type="domain" description="TRAM" evidence="1">
    <location>
        <begin position="373"/>
        <end position="441"/>
    </location>
</feature>
<feature type="binding site" evidence="1">
    <location>
        <position position="10"/>
    </location>
    <ligand>
        <name>[4Fe-4S] cluster</name>
        <dbReference type="ChEBI" id="CHEBI:49883"/>
        <label>1</label>
    </ligand>
</feature>
<feature type="binding site" evidence="1">
    <location>
        <position position="45"/>
    </location>
    <ligand>
        <name>[4Fe-4S] cluster</name>
        <dbReference type="ChEBI" id="CHEBI:49883"/>
        <label>1</label>
    </ligand>
</feature>
<feature type="binding site" evidence="1">
    <location>
        <position position="79"/>
    </location>
    <ligand>
        <name>[4Fe-4S] cluster</name>
        <dbReference type="ChEBI" id="CHEBI:49883"/>
        <label>1</label>
    </ligand>
</feature>
<feature type="binding site" evidence="1">
    <location>
        <position position="154"/>
    </location>
    <ligand>
        <name>[4Fe-4S] cluster</name>
        <dbReference type="ChEBI" id="CHEBI:49883"/>
        <label>2</label>
        <note>4Fe-4S-S-AdoMet</note>
    </ligand>
</feature>
<feature type="binding site" evidence="1">
    <location>
        <position position="158"/>
    </location>
    <ligand>
        <name>[4Fe-4S] cluster</name>
        <dbReference type="ChEBI" id="CHEBI:49883"/>
        <label>2</label>
        <note>4Fe-4S-S-AdoMet</note>
    </ligand>
</feature>
<feature type="binding site" evidence="1">
    <location>
        <position position="161"/>
    </location>
    <ligand>
        <name>[4Fe-4S] cluster</name>
        <dbReference type="ChEBI" id="CHEBI:49883"/>
        <label>2</label>
        <note>4Fe-4S-S-AdoMet</note>
    </ligand>
</feature>
<sequence length="443" mass="49563">MKFHLISLGCAKNLVDSEVVLGCLRDAGWEMTDEQDADLLLVNTCGFIQPAVEEAVEEILALVDIKADFPEKKIVVLGCLVQRYKEQLLESLPEVDLFVGTEGVANIAEYVGKLIAGEEQDKVIMPTEFLMTAKVPRQQSTPFFRAWVKITEGCDNRCSYCMIPSIRGPLRSRSVADVLEEVQAMVASGVQEISLIAQDLTAYGDDLGDDVNLLVLLKELLAKTSVPWIRLLYLYPSELLDELLQLMAANPRIVKYLDIPIQHVNDRVLHLMNRPYGRADLEEFVDKARAHMPDIALRTTFLVGFPGETEEEYAEIGEFLRVRKLDHVGVFPYSNEEGAPSEHFPDQVDDEIKESRCARLLELQQELSTEIQKKYVGTVQKVLVEGVSEETDLLLEGRTQYQAADVDGRVYINEGQVVAGEIVDILITDSQQYDLVGGVVSVE</sequence>
<reference key="1">
    <citation type="journal article" date="2004" name="Environ. Microbiol.">
        <title>The genome of Desulfotalea psychrophila, a sulfate-reducing bacterium from permanently cold Arctic sediments.</title>
        <authorList>
            <person name="Rabus R."/>
            <person name="Ruepp A."/>
            <person name="Frickey T."/>
            <person name="Rattei T."/>
            <person name="Fartmann B."/>
            <person name="Stark M."/>
            <person name="Bauer M."/>
            <person name="Zibat A."/>
            <person name="Lombardot T."/>
            <person name="Becker I."/>
            <person name="Amann J."/>
            <person name="Gellner K."/>
            <person name="Teeling H."/>
            <person name="Leuschner W.D."/>
            <person name="Gloeckner F.-O."/>
            <person name="Lupas A.N."/>
            <person name="Amann R."/>
            <person name="Klenk H.-P."/>
        </authorList>
    </citation>
    <scope>NUCLEOTIDE SEQUENCE [LARGE SCALE GENOMIC DNA]</scope>
    <source>
        <strain>DSM 12343 / LSv54</strain>
    </source>
</reference>
<gene>
    <name evidence="1" type="primary">rimO</name>
    <name type="ordered locus">DP0817</name>
</gene>
<evidence type="ECO:0000255" key="1">
    <source>
        <dbReference type="HAMAP-Rule" id="MF_01865"/>
    </source>
</evidence>
<evidence type="ECO:0000255" key="2">
    <source>
        <dbReference type="PROSITE-ProRule" id="PRU01266"/>
    </source>
</evidence>